<gene>
    <name evidence="1" type="primary">yabA</name>
    <name type="ordered locus">BH0046</name>
</gene>
<protein>
    <recommendedName>
        <fullName evidence="1">Replication initiation control protein YabA</fullName>
    </recommendedName>
</protein>
<feature type="chain" id="PRO_0000211902" description="Replication initiation control protein YabA">
    <location>
        <begin position="1"/>
        <end position="116"/>
    </location>
</feature>
<feature type="binding site" evidence="1">
    <location>
        <position position="90"/>
    </location>
    <ligand>
        <name>Zn(2+)</name>
        <dbReference type="ChEBI" id="CHEBI:29105"/>
    </ligand>
</feature>
<feature type="binding site" evidence="1">
    <location>
        <position position="92"/>
    </location>
    <ligand>
        <name>Zn(2+)</name>
        <dbReference type="ChEBI" id="CHEBI:29105"/>
    </ligand>
</feature>
<feature type="binding site" evidence="1">
    <location>
        <position position="106"/>
    </location>
    <ligand>
        <name>Zn(2+)</name>
        <dbReference type="ChEBI" id="CHEBI:29105"/>
    </ligand>
</feature>
<feature type="binding site" evidence="1">
    <location>
        <position position="109"/>
    </location>
    <ligand>
        <name>Zn(2+)</name>
        <dbReference type="ChEBI" id="CHEBI:29105"/>
    </ligand>
</feature>
<sequence length="116" mass="13656">MNKKAIFTQVSQLEERIGELHRELGGLKEQLAYLIEENHFLTIENEHLRERLGEPELEETEEKEQVTKERKPFVGEGYDNLARLYQEGFHICNTHYGSLRKNGEDCLFCLSFLNQD</sequence>
<evidence type="ECO:0000255" key="1">
    <source>
        <dbReference type="HAMAP-Rule" id="MF_01159"/>
    </source>
</evidence>
<keyword id="KW-0963">Cytoplasm</keyword>
<keyword id="KW-0235">DNA replication</keyword>
<keyword id="KW-0236">DNA replication inhibitor</keyword>
<keyword id="KW-0479">Metal-binding</keyword>
<keyword id="KW-1185">Reference proteome</keyword>
<keyword id="KW-0862">Zinc</keyword>
<accession>Q9KGL5</accession>
<name>YABA_HALH5</name>
<comment type="function">
    <text evidence="1">Involved in control of chromosome replication initiation. Inhibits the cooperative binding of DnaA to the oriC region, thus negatively regulating initiation of chromosome replication. Inhibits the ability of DnaA-ATP to form a helix on DNA; does not disassemble preformed DnaA-DNA helices. Decreases the residence time of DnaA on the chromosome at its binding sites (oriC, replication forks and promoter-binding sites). Tethers DnaA to the replication machinery via the DNA polymerase beta sliding clamp subunit (dnaN). Associates with oriC and other DnaA targets on the chromosome in a DnaA-dependent manner.</text>
</comment>
<comment type="cofactor">
    <cofactor evidence="1">
        <name>Zn(2+)</name>
        <dbReference type="ChEBI" id="CHEBI:29105"/>
    </cofactor>
    <text evidence="1">Binds 1 zinc ion per subunit.</text>
</comment>
<comment type="subunit">
    <text evidence="1">Homotetramer. Interacts with both DnaA and DnaN, acting as a bridge between these two proteins.</text>
</comment>
<comment type="subcellular location">
    <subcellularLocation>
        <location evidence="1">Cytoplasm</location>
        <location evidence="1">Nucleoid</location>
    </subcellularLocation>
    <text evidence="1">Localizes in tight foci, which correspond to the replisome at mid-cell throughout the cell cycle.</text>
</comment>
<comment type="similarity">
    <text evidence="1">Belongs to the YabA family.</text>
</comment>
<organism>
    <name type="scientific">Halalkalibacterium halodurans (strain ATCC BAA-125 / DSM 18197 / FERM 7344 / JCM 9153 / C-125)</name>
    <name type="common">Bacillus halodurans</name>
    <dbReference type="NCBI Taxonomy" id="272558"/>
    <lineage>
        <taxon>Bacteria</taxon>
        <taxon>Bacillati</taxon>
        <taxon>Bacillota</taxon>
        <taxon>Bacilli</taxon>
        <taxon>Bacillales</taxon>
        <taxon>Bacillaceae</taxon>
        <taxon>Halalkalibacterium (ex Joshi et al. 2022)</taxon>
    </lineage>
</organism>
<proteinExistence type="inferred from homology"/>
<dbReference type="EMBL" id="BA000004">
    <property type="protein sequence ID" value="BAB03765.1"/>
    <property type="molecule type" value="Genomic_DNA"/>
</dbReference>
<dbReference type="PIR" id="F83655">
    <property type="entry name" value="F83655"/>
</dbReference>
<dbReference type="RefSeq" id="WP_010896230.1">
    <property type="nucleotide sequence ID" value="NC_002570.2"/>
</dbReference>
<dbReference type="SMR" id="Q9KGL5"/>
<dbReference type="STRING" id="272558.gene:10725868"/>
<dbReference type="DNASU" id="892701"/>
<dbReference type="GeneID" id="87595569"/>
<dbReference type="KEGG" id="bha:BH0046"/>
<dbReference type="eggNOG" id="COG4467">
    <property type="taxonomic scope" value="Bacteria"/>
</dbReference>
<dbReference type="HOGENOM" id="CLU_157169_0_0_9"/>
<dbReference type="OrthoDB" id="2112130at2"/>
<dbReference type="Proteomes" id="UP000001258">
    <property type="component" value="Chromosome"/>
</dbReference>
<dbReference type="GO" id="GO:0009295">
    <property type="term" value="C:nucleoid"/>
    <property type="evidence" value="ECO:0007669"/>
    <property type="project" value="UniProtKB-SubCell"/>
</dbReference>
<dbReference type="GO" id="GO:0006260">
    <property type="term" value="P:DNA replication"/>
    <property type="evidence" value="ECO:0007669"/>
    <property type="project" value="UniProtKB-UniRule"/>
</dbReference>
<dbReference type="HAMAP" id="MF_01159">
    <property type="entry name" value="YabA"/>
    <property type="match status" value="1"/>
</dbReference>
<dbReference type="InterPro" id="IPR010377">
    <property type="entry name" value="YabA"/>
</dbReference>
<dbReference type="NCBIfam" id="NF009644">
    <property type="entry name" value="PRK13169.1-5"/>
    <property type="match status" value="1"/>
</dbReference>
<dbReference type="Pfam" id="PF06156">
    <property type="entry name" value="YabA"/>
    <property type="match status" value="1"/>
</dbReference>
<dbReference type="PIRSF" id="PIRSF021439">
    <property type="entry name" value="DUF972"/>
    <property type="match status" value="1"/>
</dbReference>
<reference key="1">
    <citation type="journal article" date="2000" name="Nucleic Acids Res.">
        <title>Complete genome sequence of the alkaliphilic bacterium Bacillus halodurans and genomic sequence comparison with Bacillus subtilis.</title>
        <authorList>
            <person name="Takami H."/>
            <person name="Nakasone K."/>
            <person name="Takaki Y."/>
            <person name="Maeno G."/>
            <person name="Sasaki R."/>
            <person name="Masui N."/>
            <person name="Fuji F."/>
            <person name="Hirama C."/>
            <person name="Nakamura Y."/>
            <person name="Ogasawara N."/>
            <person name="Kuhara S."/>
            <person name="Horikoshi K."/>
        </authorList>
    </citation>
    <scope>NUCLEOTIDE SEQUENCE [LARGE SCALE GENOMIC DNA]</scope>
    <source>
        <strain>ATCC BAA-125 / DSM 18197 / FERM 7344 / JCM 9153 / C-125</strain>
    </source>
</reference>